<comment type="function">
    <text evidence="1">Contributes to K(+)/H(+) antiport activity by supporting proton efflux to control proton extrusion and homeostasis in chloroplasts in a light-dependent manner to modulate photosynthesis. Prevents excessive induction of non-photochemical quenching (NPQ) under continuous-light conditions. Indirectly promotes efficient inorganic carbon uptake into chloroplasts.</text>
</comment>
<comment type="catalytic activity">
    <reaction evidence="1">
        <text>K(+)(in) + H(+)(out) = K(+)(out) + H(+)(in)</text>
        <dbReference type="Rhea" id="RHEA:29467"/>
        <dbReference type="ChEBI" id="CHEBI:15378"/>
        <dbReference type="ChEBI" id="CHEBI:29103"/>
    </reaction>
</comment>
<comment type="subcellular location">
    <subcellularLocation>
        <location evidence="1">Plastid</location>
        <location evidence="1">Chloroplast inner membrane</location>
        <topology evidence="1">Multi-pass membrane protein</topology>
    </subcellularLocation>
</comment>
<comment type="similarity">
    <text evidence="1 2">Belongs to the CemA family.</text>
</comment>
<dbReference type="EMBL" id="AY916449">
    <property type="protein sequence ID" value="AAW82512.1"/>
    <property type="molecule type" value="Genomic_DNA"/>
</dbReference>
<dbReference type="RefSeq" id="YP_358589.1">
    <property type="nucleotide sequence ID" value="NC_007499.1"/>
</dbReference>
<dbReference type="SMR" id="Q3BAM9"/>
<dbReference type="GeneID" id="3741691"/>
<dbReference type="GO" id="GO:0009706">
    <property type="term" value="C:chloroplast inner membrane"/>
    <property type="evidence" value="ECO:0007669"/>
    <property type="project" value="UniProtKB-SubCell"/>
</dbReference>
<dbReference type="GO" id="GO:0015297">
    <property type="term" value="F:antiporter activity"/>
    <property type="evidence" value="ECO:0007669"/>
    <property type="project" value="UniProtKB-KW"/>
</dbReference>
<dbReference type="GO" id="GO:0015078">
    <property type="term" value="F:proton transmembrane transporter activity"/>
    <property type="evidence" value="ECO:0007669"/>
    <property type="project" value="UniProtKB-UniRule"/>
</dbReference>
<dbReference type="GO" id="GO:0006813">
    <property type="term" value="P:potassium ion transport"/>
    <property type="evidence" value="ECO:0007669"/>
    <property type="project" value="UniProtKB-UniRule"/>
</dbReference>
<dbReference type="HAMAP" id="MF_01308">
    <property type="entry name" value="CemA_PxcA"/>
    <property type="match status" value="1"/>
</dbReference>
<dbReference type="InterPro" id="IPR004282">
    <property type="entry name" value="CemA"/>
</dbReference>
<dbReference type="PANTHER" id="PTHR33650:SF2">
    <property type="entry name" value="CHLOROPLAST ENVELOPE MEMBRANE PROTEIN"/>
    <property type="match status" value="1"/>
</dbReference>
<dbReference type="PANTHER" id="PTHR33650">
    <property type="entry name" value="CHLOROPLAST ENVELOPE MEMBRANE PROTEIN-RELATED"/>
    <property type="match status" value="1"/>
</dbReference>
<dbReference type="Pfam" id="PF03040">
    <property type="entry name" value="CemA"/>
    <property type="match status" value="1"/>
</dbReference>
<sequence length="229" mass="27129">MKKKKALASLPYLVSIIFLPWWVSLSFNKCLETWVINWWNTRQSEIPLNDIQDKNVLEKFMELEELFLLDEMIKEYSETHMQRLHIGMHKETIQLVQRQNESHFHIILHFSTNLICFAILSGYFFLGNKELFIFNSWIQEFLYNLSDTIKAFSILLVTDLWIGFHSTHGWELMIGSIYNDFGLAQNDQIISGLVSTFPVILDTIVKYWIFHFLNRVSPSLVVIYHSMNE</sequence>
<feature type="chain" id="PRO_0000275247" description="Potassium/proton antiporter CemA">
    <location>
        <begin position="1"/>
        <end position="229"/>
    </location>
</feature>
<feature type="transmembrane region" description="Helical" evidence="1">
    <location>
        <begin position="7"/>
        <end position="27"/>
    </location>
</feature>
<feature type="transmembrane region" description="Helical" evidence="1">
    <location>
        <begin position="106"/>
        <end position="126"/>
    </location>
</feature>
<feature type="transmembrane region" description="Helical" evidence="1">
    <location>
        <begin position="154"/>
        <end position="174"/>
    </location>
</feature>
<feature type="transmembrane region" description="Helical" evidence="1">
    <location>
        <begin position="189"/>
        <end position="209"/>
    </location>
</feature>
<organism>
    <name type="scientific">Phalaenopsis aphrodite subsp. formosana</name>
    <name type="common">Moth orchid</name>
    <dbReference type="NCBI Taxonomy" id="308872"/>
    <lineage>
        <taxon>Eukaryota</taxon>
        <taxon>Viridiplantae</taxon>
        <taxon>Streptophyta</taxon>
        <taxon>Embryophyta</taxon>
        <taxon>Tracheophyta</taxon>
        <taxon>Spermatophyta</taxon>
        <taxon>Magnoliopsida</taxon>
        <taxon>Liliopsida</taxon>
        <taxon>Asparagales</taxon>
        <taxon>Orchidaceae</taxon>
        <taxon>Epidendroideae</taxon>
        <taxon>Vandeae</taxon>
        <taxon>Aeridinae</taxon>
        <taxon>Phalaenopsis</taxon>
    </lineage>
</organism>
<keyword id="KW-0050">Antiport</keyword>
<keyword id="KW-0150">Chloroplast</keyword>
<keyword id="KW-0375">Hydrogen ion transport</keyword>
<keyword id="KW-0406">Ion transport</keyword>
<keyword id="KW-0472">Membrane</keyword>
<keyword id="KW-0934">Plastid</keyword>
<keyword id="KW-1001">Plastid inner membrane</keyword>
<keyword id="KW-0630">Potassium</keyword>
<keyword id="KW-0633">Potassium transport</keyword>
<keyword id="KW-0812">Transmembrane</keyword>
<keyword id="KW-1133">Transmembrane helix</keyword>
<keyword id="KW-0813">Transport</keyword>
<evidence type="ECO:0000255" key="1">
    <source>
        <dbReference type="HAMAP-Rule" id="MF_01308"/>
    </source>
</evidence>
<evidence type="ECO:0000305" key="2"/>
<geneLocation type="chloroplast"/>
<accession>Q3BAM9</accession>
<proteinExistence type="inferred from homology"/>
<protein>
    <recommendedName>
        <fullName evidence="1">Potassium/proton antiporter CemA</fullName>
    </recommendedName>
    <alternativeName>
        <fullName evidence="1">Chloroplast envelope membrane protein A</fullName>
        <shortName evidence="1">CemA</shortName>
    </alternativeName>
</protein>
<gene>
    <name evidence="1" type="primary">cemA</name>
</gene>
<name>CEMA_PHAAO</name>
<reference key="1">
    <citation type="journal article" date="2006" name="Mol. Biol. Evol.">
        <title>The chloroplast genome of Phalaenopsis aphrodite (Orchidaceae): comparative analysis of evolutionary rate with that of grasses and its phylogenetic implications.</title>
        <authorList>
            <person name="Chang C.-C."/>
            <person name="Lin H.-C."/>
            <person name="Lin I.-P."/>
            <person name="Chow T.-Y."/>
            <person name="Chen H.-H."/>
            <person name="Chen W.-H."/>
            <person name="Cheng C.-H."/>
            <person name="Lin C.-Y."/>
            <person name="Liu S.-M."/>
            <person name="Chang C.-C."/>
            <person name="Chaw S.-M."/>
        </authorList>
    </citation>
    <scope>NUCLEOTIDE SEQUENCE [LARGE SCALE GENOMIC DNA]</scope>
    <source>
        <strain>cv. Taisugar TS-97</strain>
    </source>
</reference>